<gene>
    <name evidence="1" type="primary">aspS</name>
    <name type="ordered locus">CKR_2766</name>
</gene>
<protein>
    <recommendedName>
        <fullName evidence="1">Aspartate--tRNA ligase</fullName>
        <ecNumber evidence="1">6.1.1.12</ecNumber>
    </recommendedName>
    <alternativeName>
        <fullName evidence="1">Aspartyl-tRNA synthetase</fullName>
        <shortName evidence="1">AspRS</shortName>
    </alternativeName>
</protein>
<organism>
    <name type="scientific">Clostridium kluyveri (strain NBRC 12016)</name>
    <dbReference type="NCBI Taxonomy" id="583346"/>
    <lineage>
        <taxon>Bacteria</taxon>
        <taxon>Bacillati</taxon>
        <taxon>Bacillota</taxon>
        <taxon>Clostridia</taxon>
        <taxon>Eubacteriales</taxon>
        <taxon>Clostridiaceae</taxon>
        <taxon>Clostridium</taxon>
    </lineage>
</organism>
<accession>B9E5P2</accession>
<comment type="function">
    <text evidence="1">Catalyzes the attachment of L-aspartate to tRNA(Asp) in a two-step reaction: L-aspartate is first activated by ATP to form Asp-AMP and then transferred to the acceptor end of tRNA(Asp).</text>
</comment>
<comment type="catalytic activity">
    <reaction evidence="1">
        <text>tRNA(Asp) + L-aspartate + ATP = L-aspartyl-tRNA(Asp) + AMP + diphosphate</text>
        <dbReference type="Rhea" id="RHEA:19649"/>
        <dbReference type="Rhea" id="RHEA-COMP:9660"/>
        <dbReference type="Rhea" id="RHEA-COMP:9678"/>
        <dbReference type="ChEBI" id="CHEBI:29991"/>
        <dbReference type="ChEBI" id="CHEBI:30616"/>
        <dbReference type="ChEBI" id="CHEBI:33019"/>
        <dbReference type="ChEBI" id="CHEBI:78442"/>
        <dbReference type="ChEBI" id="CHEBI:78516"/>
        <dbReference type="ChEBI" id="CHEBI:456215"/>
        <dbReference type="EC" id="6.1.1.12"/>
    </reaction>
</comment>
<comment type="subunit">
    <text evidence="1">Homodimer.</text>
</comment>
<comment type="subcellular location">
    <subcellularLocation>
        <location evidence="1">Cytoplasm</location>
    </subcellularLocation>
</comment>
<comment type="similarity">
    <text evidence="1">Belongs to the class-II aminoacyl-tRNA synthetase family. Type 1 subfamily.</text>
</comment>
<reference key="1">
    <citation type="submission" date="2005-09" db="EMBL/GenBank/DDBJ databases">
        <title>Complete genome sequence of Clostridium kluyveri and comparative genomics of Clostridia species.</title>
        <authorList>
            <person name="Inui M."/>
            <person name="Nonaka H."/>
            <person name="Shinoda Y."/>
            <person name="Ikenaga Y."/>
            <person name="Abe M."/>
            <person name="Naito K."/>
            <person name="Vertes A.A."/>
            <person name="Yukawa H."/>
        </authorList>
    </citation>
    <scope>NUCLEOTIDE SEQUENCE [LARGE SCALE GENOMIC DNA]</scope>
    <source>
        <strain>NBRC 12016</strain>
    </source>
</reference>
<evidence type="ECO:0000255" key="1">
    <source>
        <dbReference type="HAMAP-Rule" id="MF_00044"/>
    </source>
</evidence>
<name>SYD_CLOK1</name>
<sequence length="590" mass="67182">MGEELKTLKRTCMCGGLTEANIGDKITVMGWVQRKRNLGGLVFVDLRDRTGILQIVFGEAINKEAFEKSDSVKSEYCIAAVGTIVKRESPNMEIPTGMVELKGEYIKIFSESETPPIYIKENLDAAENIRLKYRYLDLRRPDMQRIFMLRHKTAKVIRDFLDEQGFLEIETPILGKSTPEGARDYLVPSRNYKGKYYALPQSPQLFKQLLMVSGYDRYFQIAKCFRDEDLRANRQPEFTQVDMEISFVDQEEVMDLNERLIQRVFKQILDVDVKLPIERMTYKTAMDKYGSDKPDLRFGMEINDISEVVKGVDFKVFQNALENGGSVRAIKVTGSAALGRKQLDKLVEFVKTYGASGLIWMAYKKEGIKCSISKFLTEEDTQNILNKMEAAEGDLILIVADKNKVVFESLGALRIHMAKQTGILEGNNDFKFVWITEFPLLSYNEEENRYQAEHHPFVMPMDEDIQYLESNPEKVRAKAYDIVLNGEELGGGSIRIHDTKLQEKMFGAIGISKDTAWNKFGYFLEALKFGPPPHGGLAYGFDRMIMFLAGTDNIKDVIAFPKNQNAFCPLTEAPNSVDKSQLKDLGIEVK</sequence>
<proteinExistence type="inferred from homology"/>
<dbReference type="EC" id="6.1.1.12" evidence="1"/>
<dbReference type="EMBL" id="AP009049">
    <property type="protein sequence ID" value="BAH07817.1"/>
    <property type="molecule type" value="Genomic_DNA"/>
</dbReference>
<dbReference type="RefSeq" id="WP_012103469.1">
    <property type="nucleotide sequence ID" value="NC_011837.1"/>
</dbReference>
<dbReference type="SMR" id="B9E5P2"/>
<dbReference type="KEGG" id="ckr:CKR_2766"/>
<dbReference type="HOGENOM" id="CLU_014330_3_2_9"/>
<dbReference type="Proteomes" id="UP000007969">
    <property type="component" value="Chromosome"/>
</dbReference>
<dbReference type="GO" id="GO:0005737">
    <property type="term" value="C:cytoplasm"/>
    <property type="evidence" value="ECO:0007669"/>
    <property type="project" value="UniProtKB-SubCell"/>
</dbReference>
<dbReference type="GO" id="GO:0004815">
    <property type="term" value="F:aspartate-tRNA ligase activity"/>
    <property type="evidence" value="ECO:0007669"/>
    <property type="project" value="UniProtKB-UniRule"/>
</dbReference>
<dbReference type="GO" id="GO:0005524">
    <property type="term" value="F:ATP binding"/>
    <property type="evidence" value="ECO:0007669"/>
    <property type="project" value="UniProtKB-UniRule"/>
</dbReference>
<dbReference type="GO" id="GO:0140096">
    <property type="term" value="F:catalytic activity, acting on a protein"/>
    <property type="evidence" value="ECO:0007669"/>
    <property type="project" value="UniProtKB-ARBA"/>
</dbReference>
<dbReference type="GO" id="GO:0003676">
    <property type="term" value="F:nucleic acid binding"/>
    <property type="evidence" value="ECO:0007669"/>
    <property type="project" value="InterPro"/>
</dbReference>
<dbReference type="GO" id="GO:0016740">
    <property type="term" value="F:transferase activity"/>
    <property type="evidence" value="ECO:0007669"/>
    <property type="project" value="UniProtKB-ARBA"/>
</dbReference>
<dbReference type="GO" id="GO:0006422">
    <property type="term" value="P:aspartyl-tRNA aminoacylation"/>
    <property type="evidence" value="ECO:0007669"/>
    <property type="project" value="UniProtKB-UniRule"/>
</dbReference>
<dbReference type="CDD" id="cd00777">
    <property type="entry name" value="AspRS_core"/>
    <property type="match status" value="1"/>
</dbReference>
<dbReference type="CDD" id="cd04317">
    <property type="entry name" value="EcAspRS_like_N"/>
    <property type="match status" value="1"/>
</dbReference>
<dbReference type="Gene3D" id="3.30.930.10">
    <property type="entry name" value="Bira Bifunctional Protein, Domain 2"/>
    <property type="match status" value="1"/>
</dbReference>
<dbReference type="Gene3D" id="3.30.1360.30">
    <property type="entry name" value="GAD-like domain"/>
    <property type="match status" value="1"/>
</dbReference>
<dbReference type="Gene3D" id="2.40.50.140">
    <property type="entry name" value="Nucleic acid-binding proteins"/>
    <property type="match status" value="1"/>
</dbReference>
<dbReference type="HAMAP" id="MF_00044">
    <property type="entry name" value="Asp_tRNA_synth_type1"/>
    <property type="match status" value="1"/>
</dbReference>
<dbReference type="InterPro" id="IPR004364">
    <property type="entry name" value="Aa-tRNA-synt_II"/>
</dbReference>
<dbReference type="InterPro" id="IPR006195">
    <property type="entry name" value="aa-tRNA-synth_II"/>
</dbReference>
<dbReference type="InterPro" id="IPR045864">
    <property type="entry name" value="aa-tRNA-synth_II/BPL/LPL"/>
</dbReference>
<dbReference type="InterPro" id="IPR004524">
    <property type="entry name" value="Asp-tRNA-ligase_1"/>
</dbReference>
<dbReference type="InterPro" id="IPR047089">
    <property type="entry name" value="Asp-tRNA-ligase_1_N"/>
</dbReference>
<dbReference type="InterPro" id="IPR002312">
    <property type="entry name" value="Asp/Asn-tRNA-synth_IIb"/>
</dbReference>
<dbReference type="InterPro" id="IPR047090">
    <property type="entry name" value="AspRS_core"/>
</dbReference>
<dbReference type="InterPro" id="IPR004115">
    <property type="entry name" value="GAD-like_sf"/>
</dbReference>
<dbReference type="InterPro" id="IPR029351">
    <property type="entry name" value="GAD_dom"/>
</dbReference>
<dbReference type="InterPro" id="IPR012340">
    <property type="entry name" value="NA-bd_OB-fold"/>
</dbReference>
<dbReference type="InterPro" id="IPR004365">
    <property type="entry name" value="NA-bd_OB_tRNA"/>
</dbReference>
<dbReference type="NCBIfam" id="TIGR00459">
    <property type="entry name" value="aspS_bact"/>
    <property type="match status" value="1"/>
</dbReference>
<dbReference type="NCBIfam" id="NF001750">
    <property type="entry name" value="PRK00476.1"/>
    <property type="match status" value="1"/>
</dbReference>
<dbReference type="PANTHER" id="PTHR22594:SF5">
    <property type="entry name" value="ASPARTATE--TRNA LIGASE, MITOCHONDRIAL"/>
    <property type="match status" value="1"/>
</dbReference>
<dbReference type="PANTHER" id="PTHR22594">
    <property type="entry name" value="ASPARTYL/LYSYL-TRNA SYNTHETASE"/>
    <property type="match status" value="1"/>
</dbReference>
<dbReference type="Pfam" id="PF02938">
    <property type="entry name" value="GAD"/>
    <property type="match status" value="1"/>
</dbReference>
<dbReference type="Pfam" id="PF00152">
    <property type="entry name" value="tRNA-synt_2"/>
    <property type="match status" value="1"/>
</dbReference>
<dbReference type="Pfam" id="PF01336">
    <property type="entry name" value="tRNA_anti-codon"/>
    <property type="match status" value="1"/>
</dbReference>
<dbReference type="PRINTS" id="PR01042">
    <property type="entry name" value="TRNASYNTHASP"/>
</dbReference>
<dbReference type="SUPFAM" id="SSF55681">
    <property type="entry name" value="Class II aaRS and biotin synthetases"/>
    <property type="match status" value="1"/>
</dbReference>
<dbReference type="SUPFAM" id="SSF55261">
    <property type="entry name" value="GAD domain-like"/>
    <property type="match status" value="1"/>
</dbReference>
<dbReference type="SUPFAM" id="SSF50249">
    <property type="entry name" value="Nucleic acid-binding proteins"/>
    <property type="match status" value="1"/>
</dbReference>
<dbReference type="PROSITE" id="PS50862">
    <property type="entry name" value="AA_TRNA_LIGASE_II"/>
    <property type="match status" value="1"/>
</dbReference>
<feature type="chain" id="PRO_1000198973" description="Aspartate--tRNA ligase">
    <location>
        <begin position="1"/>
        <end position="590"/>
    </location>
</feature>
<feature type="region of interest" description="Aspartate" evidence="1">
    <location>
        <begin position="204"/>
        <end position="207"/>
    </location>
</feature>
<feature type="binding site" evidence="1">
    <location>
        <position position="180"/>
    </location>
    <ligand>
        <name>L-aspartate</name>
        <dbReference type="ChEBI" id="CHEBI:29991"/>
    </ligand>
</feature>
<feature type="binding site" evidence="1">
    <location>
        <begin position="226"/>
        <end position="228"/>
    </location>
    <ligand>
        <name>ATP</name>
        <dbReference type="ChEBI" id="CHEBI:30616"/>
    </ligand>
</feature>
<feature type="binding site" evidence="1">
    <location>
        <position position="226"/>
    </location>
    <ligand>
        <name>L-aspartate</name>
        <dbReference type="ChEBI" id="CHEBI:29991"/>
    </ligand>
</feature>
<feature type="binding site" evidence="1">
    <location>
        <position position="235"/>
    </location>
    <ligand>
        <name>ATP</name>
        <dbReference type="ChEBI" id="CHEBI:30616"/>
    </ligand>
</feature>
<feature type="binding site" evidence="1">
    <location>
        <position position="454"/>
    </location>
    <ligand>
        <name>L-aspartate</name>
        <dbReference type="ChEBI" id="CHEBI:29991"/>
    </ligand>
</feature>
<feature type="binding site" evidence="1">
    <location>
        <position position="488"/>
    </location>
    <ligand>
        <name>ATP</name>
        <dbReference type="ChEBI" id="CHEBI:30616"/>
    </ligand>
</feature>
<feature type="binding site" evidence="1">
    <location>
        <position position="495"/>
    </location>
    <ligand>
        <name>L-aspartate</name>
        <dbReference type="ChEBI" id="CHEBI:29991"/>
    </ligand>
</feature>
<feature type="binding site" evidence="1">
    <location>
        <begin position="540"/>
        <end position="543"/>
    </location>
    <ligand>
        <name>ATP</name>
        <dbReference type="ChEBI" id="CHEBI:30616"/>
    </ligand>
</feature>
<keyword id="KW-0030">Aminoacyl-tRNA synthetase</keyword>
<keyword id="KW-0067">ATP-binding</keyword>
<keyword id="KW-0963">Cytoplasm</keyword>
<keyword id="KW-0436">Ligase</keyword>
<keyword id="KW-0547">Nucleotide-binding</keyword>
<keyword id="KW-0648">Protein biosynthesis</keyword>